<feature type="chain" id="PRO_0000259014" description="Nucleotide-binding protein Tfu_2020">
    <location>
        <begin position="1"/>
        <end position="294"/>
    </location>
</feature>
<feature type="binding site" evidence="1">
    <location>
        <begin position="18"/>
        <end position="25"/>
    </location>
    <ligand>
        <name>ATP</name>
        <dbReference type="ChEBI" id="CHEBI:30616"/>
    </ligand>
</feature>
<feature type="binding site" evidence="1">
    <location>
        <begin position="69"/>
        <end position="72"/>
    </location>
    <ligand>
        <name>GTP</name>
        <dbReference type="ChEBI" id="CHEBI:37565"/>
    </ligand>
</feature>
<comment type="function">
    <text evidence="1">Displays ATPase and GTPase activities.</text>
</comment>
<comment type="similarity">
    <text evidence="1">Belongs to the RapZ-like family.</text>
</comment>
<gene>
    <name type="ordered locus">Tfu_2020</name>
</gene>
<evidence type="ECO:0000255" key="1">
    <source>
        <dbReference type="HAMAP-Rule" id="MF_00636"/>
    </source>
</evidence>
<sequence length="294" mass="32575">MATSRGDDLLPEIVVVTGMSGAGRSTAARALEDLDWFVVDNLPPALLPTMIDLAARTRGAVPQIAAVVDVRSMAFTEDLLSTVEDLRSRGIGARVVFLEASDETLVRRFESVRRPHPLQGDGRLTDGISRERELLRSIRGEADLVVDTSQLNVHQLKAKMVGFFGKARETRLRANVVSFGYKHGLPVDADLVLDCRFLPNPHWVPELRPLTGQDEPVRDYVLAQRGAKEMLDSYTEVLRLLVSGYQREGKHYMTLAVGCTGGKHRSVAMSEQLAARLRDEGVEVNIIHRDLGRE</sequence>
<proteinExistence type="inferred from homology"/>
<reference key="1">
    <citation type="journal article" date="2007" name="J. Bacteriol.">
        <title>Genome sequence and analysis of the soil cellulolytic actinomycete Thermobifida fusca YX.</title>
        <authorList>
            <person name="Lykidis A."/>
            <person name="Mavromatis K."/>
            <person name="Ivanova N."/>
            <person name="Anderson I."/>
            <person name="Land M."/>
            <person name="DiBartolo G."/>
            <person name="Martinez M."/>
            <person name="Lapidus A."/>
            <person name="Lucas S."/>
            <person name="Copeland A."/>
            <person name="Richardson P."/>
            <person name="Wilson D.B."/>
            <person name="Kyrpides N."/>
        </authorList>
    </citation>
    <scope>NUCLEOTIDE SEQUENCE [LARGE SCALE GENOMIC DNA]</scope>
    <source>
        <strain>YX</strain>
    </source>
</reference>
<keyword id="KW-0067">ATP-binding</keyword>
<keyword id="KW-0342">GTP-binding</keyword>
<keyword id="KW-0547">Nucleotide-binding</keyword>
<accession>Q47NB6</accession>
<organism>
    <name type="scientific">Thermobifida fusca (strain YX)</name>
    <dbReference type="NCBI Taxonomy" id="269800"/>
    <lineage>
        <taxon>Bacteria</taxon>
        <taxon>Bacillati</taxon>
        <taxon>Actinomycetota</taxon>
        <taxon>Actinomycetes</taxon>
        <taxon>Streptosporangiales</taxon>
        <taxon>Nocardiopsidaceae</taxon>
        <taxon>Thermobifida</taxon>
    </lineage>
</organism>
<protein>
    <recommendedName>
        <fullName evidence="1">Nucleotide-binding protein Tfu_2020</fullName>
    </recommendedName>
</protein>
<name>Y2020_THEFY</name>
<dbReference type="EMBL" id="CP000088">
    <property type="protein sequence ID" value="AAZ56053.1"/>
    <property type="molecule type" value="Genomic_DNA"/>
</dbReference>
<dbReference type="SMR" id="Q47NB6"/>
<dbReference type="STRING" id="269800.Tfu_2020"/>
<dbReference type="KEGG" id="tfu:Tfu_2020"/>
<dbReference type="eggNOG" id="COG1660">
    <property type="taxonomic scope" value="Bacteria"/>
</dbReference>
<dbReference type="HOGENOM" id="CLU_059558_0_0_11"/>
<dbReference type="OrthoDB" id="9784461at2"/>
<dbReference type="GO" id="GO:0005524">
    <property type="term" value="F:ATP binding"/>
    <property type="evidence" value="ECO:0007669"/>
    <property type="project" value="UniProtKB-UniRule"/>
</dbReference>
<dbReference type="GO" id="GO:0005525">
    <property type="term" value="F:GTP binding"/>
    <property type="evidence" value="ECO:0007669"/>
    <property type="project" value="UniProtKB-UniRule"/>
</dbReference>
<dbReference type="Gene3D" id="3.40.50.300">
    <property type="entry name" value="P-loop containing nucleotide triphosphate hydrolases"/>
    <property type="match status" value="1"/>
</dbReference>
<dbReference type="HAMAP" id="MF_00636">
    <property type="entry name" value="RapZ_like"/>
    <property type="match status" value="1"/>
</dbReference>
<dbReference type="InterPro" id="IPR027417">
    <property type="entry name" value="P-loop_NTPase"/>
</dbReference>
<dbReference type="InterPro" id="IPR005337">
    <property type="entry name" value="RapZ-like"/>
</dbReference>
<dbReference type="InterPro" id="IPR053930">
    <property type="entry name" value="RapZ-like_N"/>
</dbReference>
<dbReference type="InterPro" id="IPR053931">
    <property type="entry name" value="RapZ_C"/>
</dbReference>
<dbReference type="NCBIfam" id="NF003828">
    <property type="entry name" value="PRK05416.1"/>
    <property type="match status" value="1"/>
</dbReference>
<dbReference type="PANTHER" id="PTHR30448">
    <property type="entry name" value="RNASE ADAPTER PROTEIN RAPZ"/>
    <property type="match status" value="1"/>
</dbReference>
<dbReference type="PANTHER" id="PTHR30448:SF0">
    <property type="entry name" value="RNASE ADAPTER PROTEIN RAPZ"/>
    <property type="match status" value="1"/>
</dbReference>
<dbReference type="Pfam" id="PF22740">
    <property type="entry name" value="PapZ_C"/>
    <property type="match status" value="1"/>
</dbReference>
<dbReference type="Pfam" id="PF03668">
    <property type="entry name" value="RapZ-like_N"/>
    <property type="match status" value="1"/>
</dbReference>
<dbReference type="PIRSF" id="PIRSF005052">
    <property type="entry name" value="P-loopkin"/>
    <property type="match status" value="1"/>
</dbReference>
<dbReference type="PRINTS" id="PR01100">
    <property type="entry name" value="SHIKIMTKNASE"/>
</dbReference>
<dbReference type="SUPFAM" id="SSF52540">
    <property type="entry name" value="P-loop containing nucleoside triphosphate hydrolases"/>
    <property type="match status" value="1"/>
</dbReference>